<proteinExistence type="evidence at transcript level"/>
<sequence length="191" mass="22142">MGKQNSKLAPEVMEDLVKSTEFNEHELKQWYKGFLKDCPSGRLNLEEFQQLYVKFFPYGDASKFAQHAFRTFDKNGDGTIDFREFICALSITSRGSFEQKLNWAFNMYDLDGDGKITRVEMLEIIEAIYKMVGTVIMMKMNEDGLTPEQRVDKIFSKMDKNKDDQITLDEFKEAAKSDPSIVLLLQCDIQK</sequence>
<feature type="initiator methionine" description="Removed" evidence="1">
    <location>
        <position position="1"/>
    </location>
</feature>
<feature type="chain" id="PRO_0000073766" description="Visinin-like protein 1">
    <location>
        <begin position="2"/>
        <end position="191"/>
    </location>
</feature>
<feature type="domain" description="EF-hand 1" evidence="2">
    <location>
        <begin position="40"/>
        <end position="58"/>
    </location>
</feature>
<feature type="domain" description="EF-hand 2" evidence="2">
    <location>
        <begin position="60"/>
        <end position="95"/>
    </location>
</feature>
<feature type="domain" description="EF-hand 3" evidence="2">
    <location>
        <begin position="96"/>
        <end position="131"/>
    </location>
</feature>
<feature type="domain" description="EF-hand 4" evidence="2">
    <location>
        <begin position="146"/>
        <end position="181"/>
    </location>
</feature>
<feature type="binding site" evidence="2">
    <location>
        <position position="73"/>
    </location>
    <ligand>
        <name>Ca(2+)</name>
        <dbReference type="ChEBI" id="CHEBI:29108"/>
        <label>1</label>
    </ligand>
</feature>
<feature type="binding site" evidence="2">
    <location>
        <position position="75"/>
    </location>
    <ligand>
        <name>Ca(2+)</name>
        <dbReference type="ChEBI" id="CHEBI:29108"/>
        <label>1</label>
    </ligand>
</feature>
<feature type="binding site" evidence="2">
    <location>
        <position position="77"/>
    </location>
    <ligand>
        <name>Ca(2+)</name>
        <dbReference type="ChEBI" id="CHEBI:29108"/>
        <label>1</label>
    </ligand>
</feature>
<feature type="binding site" evidence="2">
    <location>
        <position position="79"/>
    </location>
    <ligand>
        <name>Ca(2+)</name>
        <dbReference type="ChEBI" id="CHEBI:29108"/>
        <label>1</label>
    </ligand>
</feature>
<feature type="binding site" evidence="2">
    <location>
        <position position="84"/>
    </location>
    <ligand>
        <name>Ca(2+)</name>
        <dbReference type="ChEBI" id="CHEBI:29108"/>
        <label>1</label>
    </ligand>
</feature>
<feature type="binding site" evidence="2">
    <location>
        <position position="109"/>
    </location>
    <ligand>
        <name>Ca(2+)</name>
        <dbReference type="ChEBI" id="CHEBI:29108"/>
        <label>2</label>
    </ligand>
</feature>
<feature type="binding site" evidence="2">
    <location>
        <position position="111"/>
    </location>
    <ligand>
        <name>Ca(2+)</name>
        <dbReference type="ChEBI" id="CHEBI:29108"/>
        <label>2</label>
    </ligand>
</feature>
<feature type="binding site" evidence="2">
    <location>
        <position position="113"/>
    </location>
    <ligand>
        <name>Ca(2+)</name>
        <dbReference type="ChEBI" id="CHEBI:29108"/>
        <label>2</label>
    </ligand>
</feature>
<feature type="binding site" evidence="2">
    <location>
        <position position="115"/>
    </location>
    <ligand>
        <name>Ca(2+)</name>
        <dbReference type="ChEBI" id="CHEBI:29108"/>
        <label>2</label>
    </ligand>
</feature>
<feature type="binding site" evidence="2">
    <location>
        <position position="120"/>
    </location>
    <ligand>
        <name>Ca(2+)</name>
        <dbReference type="ChEBI" id="CHEBI:29108"/>
        <label>2</label>
    </ligand>
</feature>
<feature type="binding site" evidence="2">
    <location>
        <position position="159"/>
    </location>
    <ligand>
        <name>Ca(2+)</name>
        <dbReference type="ChEBI" id="CHEBI:29108"/>
        <label>3</label>
    </ligand>
</feature>
<feature type="binding site" evidence="2">
    <location>
        <position position="161"/>
    </location>
    <ligand>
        <name>Ca(2+)</name>
        <dbReference type="ChEBI" id="CHEBI:29108"/>
        <label>3</label>
    </ligand>
</feature>
<feature type="binding site" evidence="2">
    <location>
        <position position="163"/>
    </location>
    <ligand>
        <name>Ca(2+)</name>
        <dbReference type="ChEBI" id="CHEBI:29108"/>
        <label>3</label>
    </ligand>
</feature>
<feature type="binding site" evidence="2">
    <location>
        <position position="165"/>
    </location>
    <ligand>
        <name>Ca(2+)</name>
        <dbReference type="ChEBI" id="CHEBI:29108"/>
        <label>3</label>
    </ligand>
</feature>
<feature type="binding site" evidence="2">
    <location>
        <position position="170"/>
    </location>
    <ligand>
        <name>Ca(2+)</name>
        <dbReference type="ChEBI" id="CHEBI:29108"/>
        <label>3</label>
    </ligand>
</feature>
<feature type="lipid moiety-binding region" description="N-myristoyl glycine" evidence="1">
    <location>
        <position position="2"/>
    </location>
</feature>
<protein>
    <recommendedName>
        <fullName>Visinin-like protein 1</fullName>
        <shortName>VILIP</shortName>
    </recommendedName>
    <alternativeName>
        <fullName>OZ1</fullName>
    </alternativeName>
</protein>
<dbReference type="EMBL" id="X63530">
    <property type="protein sequence ID" value="CAA45093.1"/>
    <property type="molecule type" value="mRNA"/>
</dbReference>
<dbReference type="PIR" id="A48979">
    <property type="entry name" value="A48979"/>
</dbReference>
<dbReference type="RefSeq" id="NP_990586.1">
    <property type="nucleotide sequence ID" value="NM_205255.2"/>
</dbReference>
<dbReference type="RefSeq" id="XP_015140438.1">
    <property type="nucleotide sequence ID" value="XM_015284952.4"/>
</dbReference>
<dbReference type="RefSeq" id="XP_015140439.1">
    <property type="nucleotide sequence ID" value="XM_015284953.4"/>
</dbReference>
<dbReference type="RefSeq" id="XP_015140440.1">
    <property type="nucleotide sequence ID" value="XM_015284954.3"/>
</dbReference>
<dbReference type="RefSeq" id="XP_015140441.1">
    <property type="nucleotide sequence ID" value="XM_015284955.4"/>
</dbReference>
<dbReference type="RefSeq" id="XP_015140442.1">
    <property type="nucleotide sequence ID" value="XM_015284956.4"/>
</dbReference>
<dbReference type="RefSeq" id="XP_025004325.1">
    <property type="nucleotide sequence ID" value="XM_025148557.3"/>
</dbReference>
<dbReference type="RefSeq" id="XP_025004326.1">
    <property type="nucleotide sequence ID" value="XM_025148558.3"/>
</dbReference>
<dbReference type="RefSeq" id="XP_025004328.1">
    <property type="nucleotide sequence ID" value="XM_025148560.3"/>
</dbReference>
<dbReference type="RefSeq" id="XP_046769167.1">
    <property type="nucleotide sequence ID" value="XM_046913211.1"/>
</dbReference>
<dbReference type="RefSeq" id="XP_046769168.1">
    <property type="nucleotide sequence ID" value="XM_046913212.1"/>
</dbReference>
<dbReference type="RefSeq" id="XP_046769169.1">
    <property type="nucleotide sequence ID" value="XM_046913213.1"/>
</dbReference>
<dbReference type="RefSeq" id="XP_046769170.1">
    <property type="nucleotide sequence ID" value="XM_046913214.1"/>
</dbReference>
<dbReference type="RefSeq" id="XP_046769171.1">
    <property type="nucleotide sequence ID" value="XM_046913215.1"/>
</dbReference>
<dbReference type="RefSeq" id="XP_046769172.1">
    <property type="nucleotide sequence ID" value="XM_046913216.1"/>
</dbReference>
<dbReference type="RefSeq" id="XP_046769173.1">
    <property type="nucleotide sequence ID" value="XM_046913217.1"/>
</dbReference>
<dbReference type="RefSeq" id="XP_046769174.1">
    <property type="nucleotide sequence ID" value="XM_046913218.1"/>
</dbReference>
<dbReference type="RefSeq" id="XP_046769175.1">
    <property type="nucleotide sequence ID" value="XM_046913219.1"/>
</dbReference>
<dbReference type="RefSeq" id="XP_046769176.1">
    <property type="nucleotide sequence ID" value="XM_046913220.1"/>
</dbReference>
<dbReference type="RefSeq" id="XP_046769179.1">
    <property type="nucleotide sequence ID" value="XM_046913223.1"/>
</dbReference>
<dbReference type="RefSeq" id="XP_046794478.1">
    <property type="nucleotide sequence ID" value="XM_046938522.1"/>
</dbReference>
<dbReference type="RefSeq" id="XP_046794479.1">
    <property type="nucleotide sequence ID" value="XM_046938523.1"/>
</dbReference>
<dbReference type="RefSeq" id="XP_046794480.1">
    <property type="nucleotide sequence ID" value="XM_046938524.1"/>
</dbReference>
<dbReference type="SMR" id="P62764"/>
<dbReference type="BioGRID" id="676449">
    <property type="interactions" value="2"/>
</dbReference>
<dbReference type="FunCoup" id="P62764">
    <property type="interactions" value="140"/>
</dbReference>
<dbReference type="IntAct" id="P62764">
    <property type="interactions" value="1"/>
</dbReference>
<dbReference type="STRING" id="9031.ENSGALP00000006059"/>
<dbReference type="PaxDb" id="9031-ENSGALP00000026514"/>
<dbReference type="Ensembl" id="ENSGALT00010005373.1">
    <property type="protein sequence ID" value="ENSGALP00010003212.1"/>
    <property type="gene ID" value="ENSGALG00010002364.1"/>
</dbReference>
<dbReference type="GeneID" id="396189"/>
<dbReference type="KEGG" id="gga:396189"/>
<dbReference type="CTD" id="7447"/>
<dbReference type="VEuPathDB" id="HostDB:geneid_396189"/>
<dbReference type="eggNOG" id="KOG0044">
    <property type="taxonomic scope" value="Eukaryota"/>
</dbReference>
<dbReference type="GeneTree" id="ENSGT00940000156513"/>
<dbReference type="HOGENOM" id="CLU_072366_1_0_1"/>
<dbReference type="InParanoid" id="P62764"/>
<dbReference type="PhylomeDB" id="P62764"/>
<dbReference type="TreeFam" id="TF300009"/>
<dbReference type="PRO" id="PR:P62764"/>
<dbReference type="Proteomes" id="UP000000539">
    <property type="component" value="Chromosome 3"/>
</dbReference>
<dbReference type="Bgee" id="ENSGALG00000016464">
    <property type="expression patterns" value="Expressed in brain and 9 other cell types or tissues"/>
</dbReference>
<dbReference type="GO" id="GO:0005509">
    <property type="term" value="F:calcium ion binding"/>
    <property type="evidence" value="ECO:0000318"/>
    <property type="project" value="GO_Central"/>
</dbReference>
<dbReference type="GO" id="GO:0009966">
    <property type="term" value="P:regulation of signal transduction"/>
    <property type="evidence" value="ECO:0000318"/>
    <property type="project" value="GO_Central"/>
</dbReference>
<dbReference type="CDD" id="cd00051">
    <property type="entry name" value="EFh"/>
    <property type="match status" value="2"/>
</dbReference>
<dbReference type="FunFam" id="1.10.238.10:FF:000009">
    <property type="entry name" value="Visinin-like protein 1"/>
    <property type="match status" value="1"/>
</dbReference>
<dbReference type="Gene3D" id="1.10.238.10">
    <property type="entry name" value="EF-hand"/>
    <property type="match status" value="1"/>
</dbReference>
<dbReference type="InterPro" id="IPR011992">
    <property type="entry name" value="EF-hand-dom_pair"/>
</dbReference>
<dbReference type="InterPro" id="IPR018247">
    <property type="entry name" value="EF_Hand_1_Ca_BS"/>
</dbReference>
<dbReference type="InterPro" id="IPR002048">
    <property type="entry name" value="EF_hand_dom"/>
</dbReference>
<dbReference type="InterPro" id="IPR028846">
    <property type="entry name" value="Recoverin"/>
</dbReference>
<dbReference type="PANTHER" id="PTHR23055">
    <property type="entry name" value="CALCIUM BINDING PROTEINS"/>
    <property type="match status" value="1"/>
</dbReference>
<dbReference type="PANTHER" id="PTHR23055:SF101">
    <property type="entry name" value="VISININ-LIKE PROTEIN 1"/>
    <property type="match status" value="1"/>
</dbReference>
<dbReference type="Pfam" id="PF00036">
    <property type="entry name" value="EF-hand_1"/>
    <property type="match status" value="1"/>
</dbReference>
<dbReference type="Pfam" id="PF13499">
    <property type="entry name" value="EF-hand_7"/>
    <property type="match status" value="1"/>
</dbReference>
<dbReference type="PRINTS" id="PR00450">
    <property type="entry name" value="RECOVERIN"/>
</dbReference>
<dbReference type="SMART" id="SM00054">
    <property type="entry name" value="EFh"/>
    <property type="match status" value="3"/>
</dbReference>
<dbReference type="SUPFAM" id="SSF47473">
    <property type="entry name" value="EF-hand"/>
    <property type="match status" value="1"/>
</dbReference>
<dbReference type="PROSITE" id="PS00018">
    <property type="entry name" value="EF_HAND_1"/>
    <property type="match status" value="3"/>
</dbReference>
<dbReference type="PROSITE" id="PS50222">
    <property type="entry name" value="EF_HAND_2"/>
    <property type="match status" value="4"/>
</dbReference>
<organism>
    <name type="scientific">Gallus gallus</name>
    <name type="common">Chicken</name>
    <dbReference type="NCBI Taxonomy" id="9031"/>
    <lineage>
        <taxon>Eukaryota</taxon>
        <taxon>Metazoa</taxon>
        <taxon>Chordata</taxon>
        <taxon>Craniata</taxon>
        <taxon>Vertebrata</taxon>
        <taxon>Euteleostomi</taxon>
        <taxon>Archelosauria</taxon>
        <taxon>Archosauria</taxon>
        <taxon>Dinosauria</taxon>
        <taxon>Saurischia</taxon>
        <taxon>Theropoda</taxon>
        <taxon>Coelurosauria</taxon>
        <taxon>Aves</taxon>
        <taxon>Neognathae</taxon>
        <taxon>Galloanserae</taxon>
        <taxon>Galliformes</taxon>
        <taxon>Phasianidae</taxon>
        <taxon>Phasianinae</taxon>
        <taxon>Gallus</taxon>
    </lineage>
</organism>
<comment type="function">
    <text evidence="1">Regulates (in vitro) the inhibition of rhodopsin phosphorylation in a calcium-dependent manner.</text>
</comment>
<comment type="tissue specificity">
    <text evidence="3">Widely expressed in the brain but not detectable in liver, heart or skeletal muscle.</text>
</comment>
<comment type="miscellaneous">
    <text>Probably binds three calcium ions.</text>
</comment>
<comment type="similarity">
    <text evidence="4">Belongs to the recoverin family.</text>
</comment>
<name>VISL1_CHICK</name>
<keyword id="KW-0106">Calcium</keyword>
<keyword id="KW-0449">Lipoprotein</keyword>
<keyword id="KW-0479">Metal-binding</keyword>
<keyword id="KW-0519">Myristate</keyword>
<keyword id="KW-1185">Reference proteome</keyword>
<keyword id="KW-0677">Repeat</keyword>
<gene>
    <name type="primary">VSNL1</name>
</gene>
<accession>P62764</accession>
<accession>P28677</accession>
<accession>P29103</accession>
<accession>P42323</accession>
<accession>Q9UM20</accession>
<evidence type="ECO:0000250" key="1"/>
<evidence type="ECO:0000255" key="2">
    <source>
        <dbReference type="PROSITE-ProRule" id="PRU00448"/>
    </source>
</evidence>
<evidence type="ECO:0000269" key="3">
    <source>
    </source>
</evidence>
<evidence type="ECO:0000305" key="4"/>
<reference key="1">
    <citation type="journal article" date="1992" name="Brain Res. Mol. Brain Res.">
        <title>VILIP, a cognate protein of the retinal calcium binding proteins visinin and recoverin, is expressed in the developing chicken brain.</title>
        <authorList>
            <person name="Lenz S."/>
            <person name="Henschel Y."/>
            <person name="Zopf D."/>
            <person name="Voss B."/>
            <person name="Gundelfinger E.D."/>
        </authorList>
    </citation>
    <scope>NUCLEOTIDE SEQUENCE [MRNA]</scope>
    <scope>TISSUE SPECIFICITY</scope>
    <source>
        <strain>White leghorn</strain>
        <tissue>Brain</tissue>
    </source>
</reference>